<comment type="function">
    <text evidence="7">Inhibitory regulator of the Ras-cyclic AMP pathway. May function as a negative regulator of Ras85D/Ras1 in the sev signaling pathway. Acts cell autonomously in cone cell precursors as a negative regulator of R7 photoreceptor cell determination.</text>
</comment>
<comment type="subunit">
    <text evidence="6">Interacts with sty.</text>
</comment>
<comment type="tissue specificity">
    <text evidence="7">In third instar larvae eye imaginal disk, expressed in cells posterior to the morphogenetic furrow, in all photoreceptor and cone cell precursors as well as in still uncommitted cells.</text>
</comment>
<comment type="disruption phenotype">
    <text evidence="7">Mutant flies display a highly irregular eye pattern, with ommatidia improperly oriented and occasionally fused. Most of these ommatidia contain extra cells that resemble R7 photoreceptor cell, characterized by small rhabdomere diameter, a central position in the distal half of the retina and expression of the R7-specific rhodopsin Rh4. The extra R7 cells are derived from cone cell precursors. In mutant wing, an additional longitudinal vein branches off the posterior crossvein, the wing veins widen at their junctions with the wing margins and wing vein material is found in between the longitudinal veins.</text>
</comment>
<sequence>MLLKKKRYMFDERDDNNINSPVAVEPSSNNNKMADTREVRIEEQLKVKIGEAKNLSSRNAANTSCSTQGTRDVYCTIALDQEEICRTPTIERTLTPFFGEEHQFKIPRRFRYLTIYLWDRDMKQDKPIGKIAIKREELHMYNHKDHWFSLRPVDQDSEVQGMVNVEVAFTEAQQTQSLSEGIDLGQHTLRHHQNLPHHSHQQRAHLNDYKENSELSNIQRASAAAASSSSAAMTLKTRAAGLFGHVHHPPSQTQHFPIINTTSTSSDQLSNWKSHGRFVGVTIKVPACVDLAKKQGTCDPFVVCTAHYSNKHQVTRRTKQRKKTVDPEFDEAMYFDLHIDADAGSTNTTGSNKSAGSLESSANKGYSIYPVGGADLVEIVVSVWHDAHGAMSDKVFLGEVRLPMLNKQEQQAVNPSAWYYLQPRSMTHSSRSLNATPRSCATPPGTRLSVDSTIGSLRLNLNYTADHVFPLATYDDLMNLLLESVDQRPITVSAVSILGELVSGKTEVAQPLVRLFTHTERIAPIIKALADHEISHLTDPTTIFRGNTLVSKMMDEAMRLSGLHYLHQTLRPVLSQIVAEKKPCEIDPSKIKDRSAVDTNLHNLQDYVERVFEAITKSADRCPKVLCQIFHDLRECAGEHFPSNREVRYSVVSGFIFLRFFAPAILGPKLFDLTTERLDAQTSRTLTLISKTIQSLGNLVSSRSSQQTCKEEFTVELYKKFCTEQHVDAVKHFLEVISTPSHASSSVHPAAAAATPLEPVLLKEGLMTKYPTSRKRFGRQFKQRHFRLTTHSLSYAKSKGKQPICDIPLQEIASVEQLKDKSFKMQNCFKIVHNDRSLIVQTTNCVEEREWFDLLHKICLMNSIRMQYFHPSAFVSGFYSCCGRSDENSPGCKKVLDKTMDYFQMDLVTALDPALDLQRIHTLIMSNMSVLESLLDPLTYHQSLSQTQHQQHNPLVPLATDLQKHSPQAFAEFKRTIEKLREKAYAIDRDHRDYKQGITRQLKYGSRQAPIGDDNYWHMMRAAGQLNQQHHQQQQHQQQQQQQQQQQLQQFQPQPVLPQMQNVRAYPYQPATSNMNAYCLHNMQYQQQRLPFHQQQQQHHQQLQQQQSQFQPLRSHQLQRHNNNLNNNNCGNGSSSSPSSTTSSVVAAPPSTTSSSQPAPPIY</sequence>
<reference key="1">
    <citation type="journal article" date="1992" name="Cell">
        <title>A putative Ras GTPase activating protein acts as a negative regulator of signaling by the Sevenless receptor tyrosine kinase.</title>
        <authorList>
            <person name="Gaul U."/>
            <person name="Mardon G."/>
            <person name="Rubin G.M."/>
        </authorList>
    </citation>
    <scope>NUCLEOTIDE SEQUENCE [MRNA]</scope>
    <scope>FUNCTION</scope>
    <scope>TISSUE SPECIFICITY</scope>
    <scope>DISRUPTION PHENOTYPE</scope>
</reference>
<reference key="2">
    <citation type="journal article" date="2000" name="Science">
        <title>The genome sequence of Drosophila melanogaster.</title>
        <authorList>
            <person name="Adams M.D."/>
            <person name="Celniker S.E."/>
            <person name="Holt R.A."/>
            <person name="Evans C.A."/>
            <person name="Gocayne J.D."/>
            <person name="Amanatides P.G."/>
            <person name="Scherer S.E."/>
            <person name="Li P.W."/>
            <person name="Hoskins R.A."/>
            <person name="Galle R.F."/>
            <person name="George R.A."/>
            <person name="Lewis S.E."/>
            <person name="Richards S."/>
            <person name="Ashburner M."/>
            <person name="Henderson S.N."/>
            <person name="Sutton G.G."/>
            <person name="Wortman J.R."/>
            <person name="Yandell M.D."/>
            <person name="Zhang Q."/>
            <person name="Chen L.X."/>
            <person name="Brandon R.C."/>
            <person name="Rogers Y.-H.C."/>
            <person name="Blazej R.G."/>
            <person name="Champe M."/>
            <person name="Pfeiffer B.D."/>
            <person name="Wan K.H."/>
            <person name="Doyle C."/>
            <person name="Baxter E.G."/>
            <person name="Helt G."/>
            <person name="Nelson C.R."/>
            <person name="Miklos G.L.G."/>
            <person name="Abril J.F."/>
            <person name="Agbayani A."/>
            <person name="An H.-J."/>
            <person name="Andrews-Pfannkoch C."/>
            <person name="Baldwin D."/>
            <person name="Ballew R.M."/>
            <person name="Basu A."/>
            <person name="Baxendale J."/>
            <person name="Bayraktaroglu L."/>
            <person name="Beasley E.M."/>
            <person name="Beeson K.Y."/>
            <person name="Benos P.V."/>
            <person name="Berman B.P."/>
            <person name="Bhandari D."/>
            <person name="Bolshakov S."/>
            <person name="Borkova D."/>
            <person name="Botchan M.R."/>
            <person name="Bouck J."/>
            <person name="Brokstein P."/>
            <person name="Brottier P."/>
            <person name="Burtis K.C."/>
            <person name="Busam D.A."/>
            <person name="Butler H."/>
            <person name="Cadieu E."/>
            <person name="Center A."/>
            <person name="Chandra I."/>
            <person name="Cherry J.M."/>
            <person name="Cawley S."/>
            <person name="Dahlke C."/>
            <person name="Davenport L.B."/>
            <person name="Davies P."/>
            <person name="de Pablos B."/>
            <person name="Delcher A."/>
            <person name="Deng Z."/>
            <person name="Mays A.D."/>
            <person name="Dew I."/>
            <person name="Dietz S.M."/>
            <person name="Dodson K."/>
            <person name="Doup L.E."/>
            <person name="Downes M."/>
            <person name="Dugan-Rocha S."/>
            <person name="Dunkov B.C."/>
            <person name="Dunn P."/>
            <person name="Durbin K.J."/>
            <person name="Evangelista C.C."/>
            <person name="Ferraz C."/>
            <person name="Ferriera S."/>
            <person name="Fleischmann W."/>
            <person name="Fosler C."/>
            <person name="Gabrielian A.E."/>
            <person name="Garg N.S."/>
            <person name="Gelbart W.M."/>
            <person name="Glasser K."/>
            <person name="Glodek A."/>
            <person name="Gong F."/>
            <person name="Gorrell J.H."/>
            <person name="Gu Z."/>
            <person name="Guan P."/>
            <person name="Harris M."/>
            <person name="Harris N.L."/>
            <person name="Harvey D.A."/>
            <person name="Heiman T.J."/>
            <person name="Hernandez J.R."/>
            <person name="Houck J."/>
            <person name="Hostin D."/>
            <person name="Houston K.A."/>
            <person name="Howland T.J."/>
            <person name="Wei M.-H."/>
            <person name="Ibegwam C."/>
            <person name="Jalali M."/>
            <person name="Kalush F."/>
            <person name="Karpen G.H."/>
            <person name="Ke Z."/>
            <person name="Kennison J.A."/>
            <person name="Ketchum K.A."/>
            <person name="Kimmel B.E."/>
            <person name="Kodira C.D."/>
            <person name="Kraft C.L."/>
            <person name="Kravitz S."/>
            <person name="Kulp D."/>
            <person name="Lai Z."/>
            <person name="Lasko P."/>
            <person name="Lei Y."/>
            <person name="Levitsky A.A."/>
            <person name="Li J.H."/>
            <person name="Li Z."/>
            <person name="Liang Y."/>
            <person name="Lin X."/>
            <person name="Liu X."/>
            <person name="Mattei B."/>
            <person name="McIntosh T.C."/>
            <person name="McLeod M.P."/>
            <person name="McPherson D."/>
            <person name="Merkulov G."/>
            <person name="Milshina N.V."/>
            <person name="Mobarry C."/>
            <person name="Morris J."/>
            <person name="Moshrefi A."/>
            <person name="Mount S.M."/>
            <person name="Moy M."/>
            <person name="Murphy B."/>
            <person name="Murphy L."/>
            <person name="Muzny D.M."/>
            <person name="Nelson D.L."/>
            <person name="Nelson D.R."/>
            <person name="Nelson K.A."/>
            <person name="Nixon K."/>
            <person name="Nusskern D.R."/>
            <person name="Pacleb J.M."/>
            <person name="Palazzolo M."/>
            <person name="Pittman G.S."/>
            <person name="Pan S."/>
            <person name="Pollard J."/>
            <person name="Puri V."/>
            <person name="Reese M.G."/>
            <person name="Reinert K."/>
            <person name="Remington K."/>
            <person name="Saunders R.D.C."/>
            <person name="Scheeler F."/>
            <person name="Shen H."/>
            <person name="Shue B.C."/>
            <person name="Siden-Kiamos I."/>
            <person name="Simpson M."/>
            <person name="Skupski M.P."/>
            <person name="Smith T.J."/>
            <person name="Spier E."/>
            <person name="Spradling A.C."/>
            <person name="Stapleton M."/>
            <person name="Strong R."/>
            <person name="Sun E."/>
            <person name="Svirskas R."/>
            <person name="Tector C."/>
            <person name="Turner R."/>
            <person name="Venter E."/>
            <person name="Wang A.H."/>
            <person name="Wang X."/>
            <person name="Wang Z.-Y."/>
            <person name="Wassarman D.A."/>
            <person name="Weinstock G.M."/>
            <person name="Weissenbach J."/>
            <person name="Williams S.M."/>
            <person name="Woodage T."/>
            <person name="Worley K.C."/>
            <person name="Wu D."/>
            <person name="Yang S."/>
            <person name="Yao Q.A."/>
            <person name="Ye J."/>
            <person name="Yeh R.-F."/>
            <person name="Zaveri J.S."/>
            <person name="Zhan M."/>
            <person name="Zhang G."/>
            <person name="Zhao Q."/>
            <person name="Zheng L."/>
            <person name="Zheng X.H."/>
            <person name="Zhong F.N."/>
            <person name="Zhong W."/>
            <person name="Zhou X."/>
            <person name="Zhu S.C."/>
            <person name="Zhu X."/>
            <person name="Smith H.O."/>
            <person name="Gibbs R.A."/>
            <person name="Myers E.W."/>
            <person name="Rubin G.M."/>
            <person name="Venter J.C."/>
        </authorList>
    </citation>
    <scope>NUCLEOTIDE SEQUENCE [LARGE SCALE GENOMIC DNA]</scope>
    <source>
        <strain>Berkeley</strain>
    </source>
</reference>
<reference key="3">
    <citation type="journal article" date="2002" name="Genome Biol.">
        <title>Annotation of the Drosophila melanogaster euchromatic genome: a systematic review.</title>
        <authorList>
            <person name="Misra S."/>
            <person name="Crosby M.A."/>
            <person name="Mungall C.J."/>
            <person name="Matthews B.B."/>
            <person name="Campbell K.S."/>
            <person name="Hradecky P."/>
            <person name="Huang Y."/>
            <person name="Kaminker J.S."/>
            <person name="Millburn G.H."/>
            <person name="Prochnik S.E."/>
            <person name="Smith C.D."/>
            <person name="Tupy J.L."/>
            <person name="Whitfield E.J."/>
            <person name="Bayraktaroglu L."/>
            <person name="Berman B.P."/>
            <person name="Bettencourt B.R."/>
            <person name="Celniker S.E."/>
            <person name="de Grey A.D.N.J."/>
            <person name="Drysdale R.A."/>
            <person name="Harris N.L."/>
            <person name="Richter J."/>
            <person name="Russo S."/>
            <person name="Schroeder A.J."/>
            <person name="Shu S.Q."/>
            <person name="Stapleton M."/>
            <person name="Yamada C."/>
            <person name="Ashburner M."/>
            <person name="Gelbart W.M."/>
            <person name="Rubin G.M."/>
            <person name="Lewis S.E."/>
        </authorList>
    </citation>
    <scope>GENOME REANNOTATION</scope>
    <source>
        <strain>Berkeley</strain>
    </source>
</reference>
<reference key="4">
    <citation type="journal article" date="2002" name="Genome Biol.">
        <title>A Drosophila full-length cDNA resource.</title>
        <authorList>
            <person name="Stapleton M."/>
            <person name="Carlson J.W."/>
            <person name="Brokstein P."/>
            <person name="Yu C."/>
            <person name="Champe M."/>
            <person name="George R.A."/>
            <person name="Guarin H."/>
            <person name="Kronmiller B."/>
            <person name="Pacleb J.M."/>
            <person name="Park S."/>
            <person name="Wan K.H."/>
            <person name="Rubin G.M."/>
            <person name="Celniker S.E."/>
        </authorList>
    </citation>
    <scope>NUCLEOTIDE SEQUENCE [LARGE SCALE MRNA]</scope>
    <source>
        <strain>Berkeley</strain>
        <tissue>Embryo</tissue>
    </source>
</reference>
<reference key="5">
    <citation type="submission" date="2003-12" db="EMBL/GenBank/DDBJ databases">
        <authorList>
            <person name="Stapleton M."/>
            <person name="Brokstein P."/>
            <person name="Hong L."/>
            <person name="Agbayani A."/>
            <person name="Carlson J.W."/>
            <person name="Champe M."/>
            <person name="Chavez C."/>
            <person name="Dorsett V."/>
            <person name="Dresnek D."/>
            <person name="Farfan D."/>
            <person name="Frise E."/>
            <person name="George R.A."/>
            <person name="Gonzalez M."/>
            <person name="Guarin H."/>
            <person name="Kronmiller B."/>
            <person name="Li P.W."/>
            <person name="Liao G."/>
            <person name="Miranda A."/>
            <person name="Mungall C.J."/>
            <person name="Nunoo J."/>
            <person name="Pacleb J.M."/>
            <person name="Paragas V."/>
            <person name="Park S."/>
            <person name="Patel S."/>
            <person name="Phouanenavong S."/>
            <person name="Wan K.H."/>
            <person name="Yu C."/>
            <person name="Lewis S.E."/>
            <person name="Rubin G.M."/>
            <person name="Celniker S.E."/>
        </authorList>
    </citation>
    <scope>NUCLEOTIDE SEQUENCE [LARGE SCALE MRNA] OF 629-1163</scope>
    <source>
        <strain>Berkeley</strain>
        <tissue>Embryo</tissue>
    </source>
</reference>
<reference key="6">
    <citation type="journal article" date="1999" name="Cell">
        <title>Sprouty, an intracellular inhibitor of Ras signaling.</title>
        <authorList>
            <person name="Casci T."/>
            <person name="Vinos J."/>
            <person name="Freeman M."/>
        </authorList>
    </citation>
    <scope>INTERACTION WITH STY</scope>
</reference>
<evidence type="ECO:0000255" key="1">
    <source>
        <dbReference type="PROSITE-ProRule" id="PRU00041"/>
    </source>
</evidence>
<evidence type="ECO:0000255" key="2">
    <source>
        <dbReference type="PROSITE-ProRule" id="PRU00145"/>
    </source>
</evidence>
<evidence type="ECO:0000255" key="3">
    <source>
        <dbReference type="PROSITE-ProRule" id="PRU00167"/>
    </source>
</evidence>
<evidence type="ECO:0000255" key="4">
    <source>
        <dbReference type="PROSITE-ProRule" id="PRU00432"/>
    </source>
</evidence>
<evidence type="ECO:0000256" key="5">
    <source>
        <dbReference type="SAM" id="MobiDB-lite"/>
    </source>
</evidence>
<evidence type="ECO:0000269" key="6">
    <source>
    </source>
</evidence>
<evidence type="ECO:0000269" key="7">
    <source>
    </source>
</evidence>
<evidence type="ECO:0000305" key="8"/>
<gene>
    <name type="primary">RasGAP1</name>
    <name type="synonym">Gap1</name>
    <name type="ORF">CG6721</name>
</gene>
<accession>P48423</accession>
<accession>A4V1S6</accession>
<accession>Q6NP17</accession>
<accession>Q9VT58</accession>
<proteinExistence type="evidence at protein level"/>
<feature type="chain" id="PRO_0000056661" description="GTPase-activating protein">
    <location>
        <begin position="1"/>
        <end position="1163"/>
    </location>
</feature>
<feature type="domain" description="C2 1" evidence="1">
    <location>
        <begin position="26"/>
        <end position="148"/>
    </location>
</feature>
<feature type="domain" description="C2 2" evidence="1">
    <location>
        <begin position="261"/>
        <end position="419"/>
    </location>
</feature>
<feature type="domain" description="Ras-GAP" evidence="3">
    <location>
        <begin position="520"/>
        <end position="737"/>
    </location>
</feature>
<feature type="domain" description="PH" evidence="2">
    <location>
        <begin position="762"/>
        <end position="860"/>
    </location>
</feature>
<feature type="zinc finger region" description="Btk-type" evidence="4">
    <location>
        <begin position="862"/>
        <end position="898"/>
    </location>
</feature>
<feature type="region of interest" description="Disordered" evidence="5">
    <location>
        <begin position="1026"/>
        <end position="1051"/>
    </location>
</feature>
<feature type="region of interest" description="Disordered" evidence="5">
    <location>
        <begin position="1091"/>
        <end position="1163"/>
    </location>
</feature>
<feature type="compositionally biased region" description="Low complexity" evidence="5">
    <location>
        <begin position="1091"/>
        <end position="1157"/>
    </location>
</feature>
<feature type="binding site" evidence="4">
    <location>
        <position position="870"/>
    </location>
    <ligand>
        <name>Zn(2+)</name>
        <dbReference type="ChEBI" id="CHEBI:29105"/>
    </ligand>
</feature>
<feature type="binding site" evidence="4">
    <location>
        <position position="881"/>
    </location>
    <ligand>
        <name>Zn(2+)</name>
        <dbReference type="ChEBI" id="CHEBI:29105"/>
    </ligand>
</feature>
<feature type="binding site" evidence="4">
    <location>
        <position position="882"/>
    </location>
    <ligand>
        <name>Zn(2+)</name>
        <dbReference type="ChEBI" id="CHEBI:29105"/>
    </ligand>
</feature>
<feature type="binding site" evidence="4">
    <location>
        <position position="892"/>
    </location>
    <ligand>
        <name>Zn(2+)</name>
        <dbReference type="ChEBI" id="CHEBI:29105"/>
    </ligand>
</feature>
<feature type="site" description="Arginine finger; crucial for GTP hydrolysis by stabilizing the transition state" evidence="3">
    <location>
        <position position="545"/>
    </location>
</feature>
<feature type="sequence conflict" description="In Ref. 1; AAA28595." evidence="8" ref="1">
    <original>K</original>
    <variation>N</variation>
    <location>
        <position position="4"/>
    </location>
</feature>
<feature type="sequence conflict" description="In Ref. 1; AAA28595." evidence="8" ref="1">
    <original>G</original>
    <variation>GEG</variation>
    <location>
        <position position="765"/>
    </location>
</feature>
<organism>
    <name type="scientific">Drosophila melanogaster</name>
    <name type="common">Fruit fly</name>
    <dbReference type="NCBI Taxonomy" id="7227"/>
    <lineage>
        <taxon>Eukaryota</taxon>
        <taxon>Metazoa</taxon>
        <taxon>Ecdysozoa</taxon>
        <taxon>Arthropoda</taxon>
        <taxon>Hexapoda</taxon>
        <taxon>Insecta</taxon>
        <taxon>Pterygota</taxon>
        <taxon>Neoptera</taxon>
        <taxon>Endopterygota</taxon>
        <taxon>Diptera</taxon>
        <taxon>Brachycera</taxon>
        <taxon>Muscomorpha</taxon>
        <taxon>Ephydroidea</taxon>
        <taxon>Drosophilidae</taxon>
        <taxon>Drosophila</taxon>
        <taxon>Sophophora</taxon>
    </lineage>
</organism>
<protein>
    <recommendedName>
        <fullName>GTPase-activating protein</fullName>
    </recommendedName>
    <alternativeName>
        <fullName>Ras GTPase-activating protein 1</fullName>
    </alternativeName>
</protein>
<keyword id="KW-0343">GTPase activation</keyword>
<keyword id="KW-0479">Metal-binding</keyword>
<keyword id="KW-1185">Reference proteome</keyword>
<keyword id="KW-0677">Repeat</keyword>
<keyword id="KW-0862">Zinc</keyword>
<keyword id="KW-0863">Zinc-finger</keyword>
<name>GAP1_DROME</name>
<dbReference type="EMBL" id="M86655">
    <property type="protein sequence ID" value="AAA28595.1"/>
    <property type="molecule type" value="mRNA"/>
</dbReference>
<dbReference type="EMBL" id="AE014296">
    <property type="protein sequence ID" value="AAF50196.1"/>
    <property type="molecule type" value="Genomic_DNA"/>
</dbReference>
<dbReference type="EMBL" id="AE014296">
    <property type="protein sequence ID" value="AAN11935.1"/>
    <property type="molecule type" value="Genomic_DNA"/>
</dbReference>
<dbReference type="EMBL" id="AY051747">
    <property type="protein sequence ID" value="AAK93171.1"/>
    <property type="molecule type" value="mRNA"/>
</dbReference>
<dbReference type="EMBL" id="BT011114">
    <property type="protein sequence ID" value="AAR82781.1"/>
    <property type="molecule type" value="mRNA"/>
</dbReference>
<dbReference type="PIR" id="A42142">
    <property type="entry name" value="S27809"/>
</dbReference>
<dbReference type="RefSeq" id="NP_524014.2">
    <property type="nucleotide sequence ID" value="NM_079290.3"/>
</dbReference>
<dbReference type="RefSeq" id="NP_729562.1">
    <property type="nucleotide sequence ID" value="NM_168382.2"/>
</dbReference>
<dbReference type="SMR" id="P48423"/>
<dbReference type="BioGRID" id="64545">
    <property type="interactions" value="41"/>
</dbReference>
<dbReference type="FunCoup" id="P48423">
    <property type="interactions" value="613"/>
</dbReference>
<dbReference type="IntAct" id="P48423">
    <property type="interactions" value="1"/>
</dbReference>
<dbReference type="STRING" id="7227.FBpp0303201"/>
<dbReference type="PaxDb" id="7227-FBpp0076097"/>
<dbReference type="DNASU" id="39158"/>
<dbReference type="EnsemblMetazoa" id="FBtr0076367">
    <property type="protein sequence ID" value="FBpp0076096"/>
    <property type="gene ID" value="FBgn0004390"/>
</dbReference>
<dbReference type="EnsemblMetazoa" id="FBtr0076368">
    <property type="protein sequence ID" value="FBpp0076097"/>
    <property type="gene ID" value="FBgn0004390"/>
</dbReference>
<dbReference type="GeneID" id="39158"/>
<dbReference type="KEGG" id="dme:Dmel_CG6721"/>
<dbReference type="AGR" id="FB:FBgn0004390"/>
<dbReference type="CTD" id="39158"/>
<dbReference type="FlyBase" id="FBgn0004390">
    <property type="gene designation" value="RasGAP1"/>
</dbReference>
<dbReference type="VEuPathDB" id="VectorBase:FBgn0004390"/>
<dbReference type="eggNOG" id="KOG2059">
    <property type="taxonomic scope" value="Eukaryota"/>
</dbReference>
<dbReference type="GeneTree" id="ENSGT00940000167058"/>
<dbReference type="HOGENOM" id="CLU_008096_1_0_1"/>
<dbReference type="InParanoid" id="P48423"/>
<dbReference type="OMA" id="CKEEYMA"/>
<dbReference type="OrthoDB" id="1562946at2759"/>
<dbReference type="PhylomeDB" id="P48423"/>
<dbReference type="Reactome" id="R-DME-5658442">
    <property type="pathway name" value="Regulation of RAS by GAPs"/>
</dbReference>
<dbReference type="SignaLink" id="P48423"/>
<dbReference type="BioGRID-ORCS" id="39158">
    <property type="hits" value="0 hits in 3 CRISPR screens"/>
</dbReference>
<dbReference type="GenomeRNAi" id="39158"/>
<dbReference type="PRO" id="PR:P48423"/>
<dbReference type="Proteomes" id="UP000000803">
    <property type="component" value="Chromosome 3L"/>
</dbReference>
<dbReference type="Bgee" id="FBgn0004390">
    <property type="expression patterns" value="Expressed in hemocyte (sensu Nematoda and Protostomia) in arthropod fat body and 225 other cell types or tissues"/>
</dbReference>
<dbReference type="ExpressionAtlas" id="P48423">
    <property type="expression patterns" value="baseline and differential"/>
</dbReference>
<dbReference type="GO" id="GO:0005886">
    <property type="term" value="C:plasma membrane"/>
    <property type="evidence" value="ECO:0000314"/>
    <property type="project" value="FlyBase"/>
</dbReference>
<dbReference type="GO" id="GO:0005096">
    <property type="term" value="F:GTPase activator activity"/>
    <property type="evidence" value="ECO:0007669"/>
    <property type="project" value="UniProtKB-KW"/>
</dbReference>
<dbReference type="GO" id="GO:0008270">
    <property type="term" value="F:zinc ion binding"/>
    <property type="evidence" value="ECO:0007669"/>
    <property type="project" value="UniProtKB-KW"/>
</dbReference>
<dbReference type="GO" id="GO:0008595">
    <property type="term" value="P:anterior/posterior axis specification, embryo"/>
    <property type="evidence" value="ECO:0000304"/>
    <property type="project" value="FlyBase"/>
</dbReference>
<dbReference type="GO" id="GO:0007476">
    <property type="term" value="P:imaginal disc-derived wing morphogenesis"/>
    <property type="evidence" value="ECO:0000315"/>
    <property type="project" value="FlyBase"/>
</dbReference>
<dbReference type="GO" id="GO:0035556">
    <property type="term" value="P:intracellular signal transduction"/>
    <property type="evidence" value="ECO:0007669"/>
    <property type="project" value="InterPro"/>
</dbReference>
<dbReference type="GO" id="GO:0045792">
    <property type="term" value="P:negative regulation of cell size"/>
    <property type="evidence" value="ECO:0000315"/>
    <property type="project" value="FlyBase"/>
</dbReference>
<dbReference type="GO" id="GO:0042059">
    <property type="term" value="P:negative regulation of epidermal growth factor receptor signaling pathway"/>
    <property type="evidence" value="ECO:0000315"/>
    <property type="project" value="FlyBase"/>
</dbReference>
<dbReference type="GO" id="GO:0045677">
    <property type="term" value="P:negative regulation of R7 cell differentiation"/>
    <property type="evidence" value="ECO:0000316"/>
    <property type="project" value="FlyBase"/>
</dbReference>
<dbReference type="GO" id="GO:0045873">
    <property type="term" value="P:negative regulation of sevenless signaling pathway"/>
    <property type="evidence" value="ECO:0000316"/>
    <property type="project" value="FlyBase"/>
</dbReference>
<dbReference type="GO" id="GO:0120177">
    <property type="term" value="P:negative regulation of torso signaling pathway"/>
    <property type="evidence" value="ECO:0000315"/>
    <property type="project" value="FlyBase"/>
</dbReference>
<dbReference type="GO" id="GO:0030948">
    <property type="term" value="P:negative regulation of vascular endothelial growth factor receptor signaling pathway"/>
    <property type="evidence" value="ECO:0000315"/>
    <property type="project" value="FlyBase"/>
</dbReference>
<dbReference type="GO" id="GO:0045678">
    <property type="term" value="P:positive regulation of R7 cell differentiation"/>
    <property type="evidence" value="ECO:0000316"/>
    <property type="project" value="FlyBase"/>
</dbReference>
<dbReference type="CDD" id="cd08401">
    <property type="entry name" value="C2A_RasA2_RasA3"/>
    <property type="match status" value="1"/>
</dbReference>
<dbReference type="CDD" id="cd04010">
    <property type="entry name" value="C2B_RasA3"/>
    <property type="match status" value="1"/>
</dbReference>
<dbReference type="CDD" id="cd01244">
    <property type="entry name" value="PH_GAP1-like"/>
    <property type="match status" value="1"/>
</dbReference>
<dbReference type="CDD" id="cd05128">
    <property type="entry name" value="RasGAP_GAP1_like"/>
    <property type="match status" value="1"/>
</dbReference>
<dbReference type="FunFam" id="1.10.506.10:FF:000037">
    <property type="entry name" value="GTPase-activating protein isoform X2"/>
    <property type="match status" value="1"/>
</dbReference>
<dbReference type="FunFam" id="2.60.40.150:FF:000069">
    <property type="entry name" value="Ras GTPase-activating protein 4 isoform 1"/>
    <property type="match status" value="1"/>
</dbReference>
<dbReference type="FunFam" id="2.30.29.30:FF:000554">
    <property type="entry name" value="Uncharacterized protein, isoform B"/>
    <property type="match status" value="1"/>
</dbReference>
<dbReference type="Gene3D" id="2.60.40.150">
    <property type="entry name" value="C2 domain"/>
    <property type="match status" value="2"/>
</dbReference>
<dbReference type="Gene3D" id="1.10.506.10">
    <property type="entry name" value="GTPase Activation - p120gap, domain 1"/>
    <property type="match status" value="1"/>
</dbReference>
<dbReference type="Gene3D" id="2.30.29.30">
    <property type="entry name" value="Pleckstrin-homology domain (PH domain)/Phosphotyrosine-binding domain (PTB)"/>
    <property type="match status" value="1"/>
</dbReference>
<dbReference type="InterPro" id="IPR000008">
    <property type="entry name" value="C2_dom"/>
</dbReference>
<dbReference type="InterPro" id="IPR035892">
    <property type="entry name" value="C2_domain_sf"/>
</dbReference>
<dbReference type="InterPro" id="IPR011993">
    <property type="entry name" value="PH-like_dom_sf"/>
</dbReference>
<dbReference type="InterPro" id="IPR001849">
    <property type="entry name" value="PH_domain"/>
</dbReference>
<dbReference type="InterPro" id="IPR039360">
    <property type="entry name" value="Ras_GTPase"/>
</dbReference>
<dbReference type="InterPro" id="IPR023152">
    <property type="entry name" value="RasGAP_CS"/>
</dbReference>
<dbReference type="InterPro" id="IPR001936">
    <property type="entry name" value="RasGAP_dom"/>
</dbReference>
<dbReference type="InterPro" id="IPR008936">
    <property type="entry name" value="Rho_GTPase_activation_prot"/>
</dbReference>
<dbReference type="InterPro" id="IPR001562">
    <property type="entry name" value="Znf_Btk_motif"/>
</dbReference>
<dbReference type="PANTHER" id="PTHR10194:SF148">
    <property type="entry name" value="GTPASE-ACTIVATING PROTEIN"/>
    <property type="match status" value="1"/>
</dbReference>
<dbReference type="PANTHER" id="PTHR10194">
    <property type="entry name" value="RAS GTPASE-ACTIVATING PROTEINS"/>
    <property type="match status" value="1"/>
</dbReference>
<dbReference type="Pfam" id="PF00779">
    <property type="entry name" value="BTK"/>
    <property type="match status" value="1"/>
</dbReference>
<dbReference type="Pfam" id="PF00168">
    <property type="entry name" value="C2"/>
    <property type="match status" value="2"/>
</dbReference>
<dbReference type="Pfam" id="PF00169">
    <property type="entry name" value="PH"/>
    <property type="match status" value="1"/>
</dbReference>
<dbReference type="Pfam" id="PF00616">
    <property type="entry name" value="RasGAP"/>
    <property type="match status" value="1"/>
</dbReference>
<dbReference type="SMART" id="SM00107">
    <property type="entry name" value="BTK"/>
    <property type="match status" value="1"/>
</dbReference>
<dbReference type="SMART" id="SM00239">
    <property type="entry name" value="C2"/>
    <property type="match status" value="2"/>
</dbReference>
<dbReference type="SMART" id="SM00233">
    <property type="entry name" value="PH"/>
    <property type="match status" value="1"/>
</dbReference>
<dbReference type="SMART" id="SM00323">
    <property type="entry name" value="RasGAP"/>
    <property type="match status" value="1"/>
</dbReference>
<dbReference type="SUPFAM" id="SSF49562">
    <property type="entry name" value="C2 domain (Calcium/lipid-binding domain, CaLB)"/>
    <property type="match status" value="2"/>
</dbReference>
<dbReference type="SUPFAM" id="SSF48350">
    <property type="entry name" value="GTPase activation domain, GAP"/>
    <property type="match status" value="1"/>
</dbReference>
<dbReference type="SUPFAM" id="SSF50729">
    <property type="entry name" value="PH domain-like"/>
    <property type="match status" value="1"/>
</dbReference>
<dbReference type="PROSITE" id="PS50004">
    <property type="entry name" value="C2"/>
    <property type="match status" value="2"/>
</dbReference>
<dbReference type="PROSITE" id="PS50003">
    <property type="entry name" value="PH_DOMAIN"/>
    <property type="match status" value="1"/>
</dbReference>
<dbReference type="PROSITE" id="PS00509">
    <property type="entry name" value="RAS_GTPASE_ACTIV_1"/>
    <property type="match status" value="1"/>
</dbReference>
<dbReference type="PROSITE" id="PS50018">
    <property type="entry name" value="RAS_GTPASE_ACTIV_2"/>
    <property type="match status" value="1"/>
</dbReference>
<dbReference type="PROSITE" id="PS51113">
    <property type="entry name" value="ZF_BTK"/>
    <property type="match status" value="1"/>
</dbReference>